<organism>
    <name type="scientific">Alcanivorax borkumensis (strain ATCC 700651 / DSM 11573 / NCIMB 13689 / SK2)</name>
    <dbReference type="NCBI Taxonomy" id="393595"/>
    <lineage>
        <taxon>Bacteria</taxon>
        <taxon>Pseudomonadati</taxon>
        <taxon>Pseudomonadota</taxon>
        <taxon>Gammaproteobacteria</taxon>
        <taxon>Oceanospirillales</taxon>
        <taxon>Alcanivoracaceae</taxon>
        <taxon>Alcanivorax</taxon>
    </lineage>
</organism>
<keyword id="KW-0143">Chaperone</keyword>
<keyword id="KW-0963">Cytoplasm</keyword>
<keyword id="KW-0533">Nickel</keyword>
<keyword id="KW-0996">Nickel insertion</keyword>
<keyword id="KW-1185">Reference proteome</keyword>
<reference key="1">
    <citation type="journal article" date="2006" name="Nat. Biotechnol.">
        <title>Genome sequence of the ubiquitous hydrocarbon-degrading marine bacterium Alcanivorax borkumensis.</title>
        <authorList>
            <person name="Schneiker S."/>
            <person name="Martins dos Santos V.A.P."/>
            <person name="Bartels D."/>
            <person name="Bekel T."/>
            <person name="Brecht M."/>
            <person name="Buhrmester J."/>
            <person name="Chernikova T.N."/>
            <person name="Denaro R."/>
            <person name="Ferrer M."/>
            <person name="Gertler C."/>
            <person name="Goesmann A."/>
            <person name="Golyshina O.V."/>
            <person name="Kaminski F."/>
            <person name="Khachane A.N."/>
            <person name="Lang S."/>
            <person name="Linke B."/>
            <person name="McHardy A.C."/>
            <person name="Meyer F."/>
            <person name="Nechitaylo T."/>
            <person name="Puehler A."/>
            <person name="Regenhardt D."/>
            <person name="Rupp O."/>
            <person name="Sabirova J.S."/>
            <person name="Selbitschka W."/>
            <person name="Yakimov M.M."/>
            <person name="Timmis K.N."/>
            <person name="Vorhoelter F.-J."/>
            <person name="Weidner S."/>
            <person name="Kaiser O."/>
            <person name="Golyshin P.N."/>
        </authorList>
    </citation>
    <scope>NUCLEOTIDE SEQUENCE [LARGE SCALE GENOMIC DNA]</scope>
    <source>
        <strain>ATCC 700651 / DSM 11573 / NCIMB 13689 / SK2</strain>
    </source>
</reference>
<feature type="chain" id="PRO_1000083871" description="Urease accessory protein UreE">
    <location>
        <begin position="1"/>
        <end position="176"/>
    </location>
</feature>
<feature type="region of interest" description="Disordered" evidence="2">
    <location>
        <begin position="147"/>
        <end position="176"/>
    </location>
</feature>
<evidence type="ECO:0000255" key="1">
    <source>
        <dbReference type="HAMAP-Rule" id="MF_00822"/>
    </source>
</evidence>
<evidence type="ECO:0000256" key="2">
    <source>
        <dbReference type="SAM" id="MobiDB-lite"/>
    </source>
</evidence>
<sequence length="176" mass="19224">MIELTKKITDTVALEKIDPARLKTLSLPLDARIKSRQKVQLTSGEGVGLFLERGTLLRGGDVLTNADGVLVKVLAANETVSTIVCSDALMLTKVAYHLGNRHVPLQIETGFVRYQHDHVLDDMVRQLPGADTCVDVQVEQAPFEPEAGAYQQGGGHSHGHAHSHSHEKPHSHTHNH</sequence>
<proteinExistence type="inferred from homology"/>
<accession>Q0VKY2</accession>
<protein>
    <recommendedName>
        <fullName evidence="1">Urease accessory protein UreE</fullName>
    </recommendedName>
</protein>
<gene>
    <name evidence="1" type="primary">ureE</name>
    <name type="ordered locus">ABO_2718</name>
</gene>
<name>UREE_ALCBS</name>
<dbReference type="EMBL" id="AM286690">
    <property type="protein sequence ID" value="CAL18166.1"/>
    <property type="molecule type" value="Genomic_DNA"/>
</dbReference>
<dbReference type="RefSeq" id="WP_011589989.1">
    <property type="nucleotide sequence ID" value="NC_008260.1"/>
</dbReference>
<dbReference type="SMR" id="Q0VKY2"/>
<dbReference type="STRING" id="393595.ABO_2718"/>
<dbReference type="KEGG" id="abo:ABO_2718"/>
<dbReference type="eggNOG" id="COG2371">
    <property type="taxonomic scope" value="Bacteria"/>
</dbReference>
<dbReference type="HOGENOM" id="CLU_093757_2_0_6"/>
<dbReference type="Proteomes" id="UP000008871">
    <property type="component" value="Chromosome"/>
</dbReference>
<dbReference type="GO" id="GO:0005737">
    <property type="term" value="C:cytoplasm"/>
    <property type="evidence" value="ECO:0007669"/>
    <property type="project" value="UniProtKB-SubCell"/>
</dbReference>
<dbReference type="GO" id="GO:0016151">
    <property type="term" value="F:nickel cation binding"/>
    <property type="evidence" value="ECO:0007669"/>
    <property type="project" value="UniProtKB-UniRule"/>
</dbReference>
<dbReference type="GO" id="GO:0051082">
    <property type="term" value="F:unfolded protein binding"/>
    <property type="evidence" value="ECO:0007669"/>
    <property type="project" value="UniProtKB-UniRule"/>
</dbReference>
<dbReference type="GO" id="GO:0006457">
    <property type="term" value="P:protein folding"/>
    <property type="evidence" value="ECO:0007669"/>
    <property type="project" value="InterPro"/>
</dbReference>
<dbReference type="GO" id="GO:0065003">
    <property type="term" value="P:protein-containing complex assembly"/>
    <property type="evidence" value="ECO:0007669"/>
    <property type="project" value="InterPro"/>
</dbReference>
<dbReference type="GO" id="GO:0019627">
    <property type="term" value="P:urea metabolic process"/>
    <property type="evidence" value="ECO:0007669"/>
    <property type="project" value="InterPro"/>
</dbReference>
<dbReference type="CDD" id="cd00571">
    <property type="entry name" value="UreE"/>
    <property type="match status" value="1"/>
</dbReference>
<dbReference type="Gene3D" id="2.60.260.20">
    <property type="entry name" value="Urease metallochaperone UreE, N-terminal domain"/>
    <property type="match status" value="1"/>
</dbReference>
<dbReference type="Gene3D" id="3.30.70.790">
    <property type="entry name" value="UreE, C-terminal domain"/>
    <property type="match status" value="1"/>
</dbReference>
<dbReference type="HAMAP" id="MF_00822">
    <property type="entry name" value="UreE"/>
    <property type="match status" value="1"/>
</dbReference>
<dbReference type="InterPro" id="IPR012406">
    <property type="entry name" value="UreE"/>
</dbReference>
<dbReference type="InterPro" id="IPR007864">
    <property type="entry name" value="UreE_C_dom"/>
</dbReference>
<dbReference type="InterPro" id="IPR004029">
    <property type="entry name" value="UreE_N"/>
</dbReference>
<dbReference type="InterPro" id="IPR036118">
    <property type="entry name" value="UreE_N_sf"/>
</dbReference>
<dbReference type="NCBIfam" id="NF009751">
    <property type="entry name" value="PRK13261.1-1"/>
    <property type="match status" value="1"/>
</dbReference>
<dbReference type="Pfam" id="PF05194">
    <property type="entry name" value="UreE_C"/>
    <property type="match status" value="1"/>
</dbReference>
<dbReference type="Pfam" id="PF02814">
    <property type="entry name" value="UreE_N"/>
    <property type="match status" value="1"/>
</dbReference>
<dbReference type="PIRSF" id="PIRSF036402">
    <property type="entry name" value="Ureas_acces_UreE"/>
    <property type="match status" value="1"/>
</dbReference>
<dbReference type="SMART" id="SM00988">
    <property type="entry name" value="UreE_N"/>
    <property type="match status" value="1"/>
</dbReference>
<dbReference type="SUPFAM" id="SSF69737">
    <property type="entry name" value="Urease metallochaperone UreE, C-terminal domain"/>
    <property type="match status" value="1"/>
</dbReference>
<dbReference type="SUPFAM" id="SSF69287">
    <property type="entry name" value="Urease metallochaperone UreE, N-terminal domain"/>
    <property type="match status" value="1"/>
</dbReference>
<comment type="function">
    <text evidence="1">Involved in urease metallocenter assembly. Binds nickel. Probably functions as a nickel donor during metallocenter assembly.</text>
</comment>
<comment type="subcellular location">
    <subcellularLocation>
        <location evidence="1">Cytoplasm</location>
    </subcellularLocation>
</comment>
<comment type="similarity">
    <text evidence="1">Belongs to the UreE family.</text>
</comment>